<dbReference type="EC" id="6.3.2.4" evidence="2"/>
<dbReference type="EMBL" id="CP001196">
    <property type="protein sequence ID" value="ACI92379.1"/>
    <property type="molecule type" value="Genomic_DNA"/>
</dbReference>
<dbReference type="EMBL" id="CP002826">
    <property type="protein sequence ID" value="AEI07416.1"/>
    <property type="molecule type" value="Genomic_DNA"/>
</dbReference>
<dbReference type="RefSeq" id="WP_012562408.1">
    <property type="nucleotide sequence ID" value="NC_015684.1"/>
</dbReference>
<dbReference type="SMR" id="B6JB38"/>
<dbReference type="STRING" id="504832.OCA5_c27220"/>
<dbReference type="KEGG" id="oca:OCAR_5247"/>
<dbReference type="KEGG" id="ocg:OCA5_c27220"/>
<dbReference type="PATRIC" id="fig|504832.7.peg.2878"/>
<dbReference type="eggNOG" id="COG1181">
    <property type="taxonomic scope" value="Bacteria"/>
</dbReference>
<dbReference type="HOGENOM" id="CLU_039268_1_1_5"/>
<dbReference type="OrthoDB" id="9813261at2"/>
<dbReference type="UniPathway" id="UPA00219"/>
<dbReference type="Proteomes" id="UP000007730">
    <property type="component" value="Chromosome"/>
</dbReference>
<dbReference type="GO" id="GO:0005737">
    <property type="term" value="C:cytoplasm"/>
    <property type="evidence" value="ECO:0007669"/>
    <property type="project" value="UniProtKB-SubCell"/>
</dbReference>
<dbReference type="GO" id="GO:0005524">
    <property type="term" value="F:ATP binding"/>
    <property type="evidence" value="ECO:0007669"/>
    <property type="project" value="UniProtKB-KW"/>
</dbReference>
<dbReference type="GO" id="GO:0008716">
    <property type="term" value="F:D-alanine-D-alanine ligase activity"/>
    <property type="evidence" value="ECO:0007669"/>
    <property type="project" value="UniProtKB-UniRule"/>
</dbReference>
<dbReference type="GO" id="GO:0046872">
    <property type="term" value="F:metal ion binding"/>
    <property type="evidence" value="ECO:0007669"/>
    <property type="project" value="UniProtKB-KW"/>
</dbReference>
<dbReference type="GO" id="GO:0071555">
    <property type="term" value="P:cell wall organization"/>
    <property type="evidence" value="ECO:0007669"/>
    <property type="project" value="UniProtKB-KW"/>
</dbReference>
<dbReference type="GO" id="GO:0009252">
    <property type="term" value="P:peptidoglycan biosynthetic process"/>
    <property type="evidence" value="ECO:0007669"/>
    <property type="project" value="UniProtKB-UniRule"/>
</dbReference>
<dbReference type="GO" id="GO:0008360">
    <property type="term" value="P:regulation of cell shape"/>
    <property type="evidence" value="ECO:0007669"/>
    <property type="project" value="UniProtKB-KW"/>
</dbReference>
<dbReference type="Gene3D" id="3.40.50.20">
    <property type="match status" value="1"/>
</dbReference>
<dbReference type="Gene3D" id="3.30.1490.20">
    <property type="entry name" value="ATP-grasp fold, A domain"/>
    <property type="match status" value="1"/>
</dbReference>
<dbReference type="Gene3D" id="3.30.470.20">
    <property type="entry name" value="ATP-grasp fold, B domain"/>
    <property type="match status" value="1"/>
</dbReference>
<dbReference type="HAMAP" id="MF_00047">
    <property type="entry name" value="Dala_Dala_lig"/>
    <property type="match status" value="1"/>
</dbReference>
<dbReference type="InterPro" id="IPR011761">
    <property type="entry name" value="ATP-grasp"/>
</dbReference>
<dbReference type="InterPro" id="IPR013815">
    <property type="entry name" value="ATP_grasp_subdomain_1"/>
</dbReference>
<dbReference type="InterPro" id="IPR000291">
    <property type="entry name" value="D-Ala_lig_Van_CS"/>
</dbReference>
<dbReference type="InterPro" id="IPR005905">
    <property type="entry name" value="D_ala_D_ala"/>
</dbReference>
<dbReference type="InterPro" id="IPR011095">
    <property type="entry name" value="Dala_Dala_lig_C"/>
</dbReference>
<dbReference type="InterPro" id="IPR011127">
    <property type="entry name" value="Dala_Dala_lig_N"/>
</dbReference>
<dbReference type="InterPro" id="IPR016185">
    <property type="entry name" value="PreATP-grasp_dom_sf"/>
</dbReference>
<dbReference type="NCBIfam" id="TIGR01205">
    <property type="entry name" value="D_ala_D_alaTIGR"/>
    <property type="match status" value="1"/>
</dbReference>
<dbReference type="NCBIfam" id="NF002378">
    <property type="entry name" value="PRK01372.1"/>
    <property type="match status" value="1"/>
</dbReference>
<dbReference type="PANTHER" id="PTHR23132">
    <property type="entry name" value="D-ALANINE--D-ALANINE LIGASE"/>
    <property type="match status" value="1"/>
</dbReference>
<dbReference type="PANTHER" id="PTHR23132:SF23">
    <property type="entry name" value="D-ALANINE--D-ALANINE LIGASE B"/>
    <property type="match status" value="1"/>
</dbReference>
<dbReference type="Pfam" id="PF07478">
    <property type="entry name" value="Dala_Dala_lig_C"/>
    <property type="match status" value="1"/>
</dbReference>
<dbReference type="Pfam" id="PF01820">
    <property type="entry name" value="Dala_Dala_lig_N"/>
    <property type="match status" value="1"/>
</dbReference>
<dbReference type="PIRSF" id="PIRSF039102">
    <property type="entry name" value="Ddl/VanB"/>
    <property type="match status" value="1"/>
</dbReference>
<dbReference type="SUPFAM" id="SSF56059">
    <property type="entry name" value="Glutathione synthetase ATP-binding domain-like"/>
    <property type="match status" value="1"/>
</dbReference>
<dbReference type="SUPFAM" id="SSF52440">
    <property type="entry name" value="PreATP-grasp domain"/>
    <property type="match status" value="1"/>
</dbReference>
<dbReference type="PROSITE" id="PS50975">
    <property type="entry name" value="ATP_GRASP"/>
    <property type="match status" value="1"/>
</dbReference>
<dbReference type="PROSITE" id="PS00843">
    <property type="entry name" value="DALA_DALA_LIGASE_1"/>
    <property type="match status" value="1"/>
</dbReference>
<dbReference type="PROSITE" id="PS00844">
    <property type="entry name" value="DALA_DALA_LIGASE_2"/>
    <property type="match status" value="1"/>
</dbReference>
<organism>
    <name type="scientific">Afipia carboxidovorans (strain ATCC 49405 / DSM 1227 / KCTC 32145 / OM5)</name>
    <name type="common">Oligotropha carboxidovorans</name>
    <dbReference type="NCBI Taxonomy" id="504832"/>
    <lineage>
        <taxon>Bacteria</taxon>
        <taxon>Pseudomonadati</taxon>
        <taxon>Pseudomonadota</taxon>
        <taxon>Alphaproteobacteria</taxon>
        <taxon>Hyphomicrobiales</taxon>
        <taxon>Nitrobacteraceae</taxon>
        <taxon>Afipia</taxon>
    </lineage>
</organism>
<keyword id="KW-0067">ATP-binding</keyword>
<keyword id="KW-0133">Cell shape</keyword>
<keyword id="KW-0961">Cell wall biogenesis/degradation</keyword>
<keyword id="KW-0963">Cytoplasm</keyword>
<keyword id="KW-0436">Ligase</keyword>
<keyword id="KW-0460">Magnesium</keyword>
<keyword id="KW-0464">Manganese</keyword>
<keyword id="KW-0479">Metal-binding</keyword>
<keyword id="KW-0547">Nucleotide-binding</keyword>
<keyword id="KW-0573">Peptidoglycan synthesis</keyword>
<keyword id="KW-1185">Reference proteome</keyword>
<reference key="1">
    <citation type="journal article" date="2008" name="J. Bacteriol.">
        <title>Genome sequence of the chemolithoautotrophic bacterium Oligotropha carboxidovorans OM5T.</title>
        <authorList>
            <person name="Paul D."/>
            <person name="Bridges S."/>
            <person name="Burgess S.C."/>
            <person name="Dandass Y."/>
            <person name="Lawrence M.L."/>
        </authorList>
    </citation>
    <scope>NUCLEOTIDE SEQUENCE [LARGE SCALE GENOMIC DNA]</scope>
    <source>
        <strain>ATCC 49405 / DSM 1227 / KCTC 32145 / OM5</strain>
    </source>
</reference>
<reference key="2">
    <citation type="journal article" date="2011" name="J. Bacteriol.">
        <title>Complete genome sequences of the chemolithoautotrophic Oligotropha carboxidovorans strains OM4 and OM5.</title>
        <authorList>
            <person name="Volland S."/>
            <person name="Rachinger M."/>
            <person name="Strittmatter A."/>
            <person name="Daniel R."/>
            <person name="Gottschalk G."/>
            <person name="Meyer O."/>
        </authorList>
    </citation>
    <scope>NUCLEOTIDE SEQUENCE [LARGE SCALE GENOMIC DNA]</scope>
    <source>
        <strain>ATCC 49405 / DSM 1227 / KCTC 32145 / OM5</strain>
    </source>
</reference>
<gene>
    <name evidence="2" type="primary">ddl</name>
    <name type="ordered locus">OCAR_5247</name>
    <name type="ordered locus">OCA5_c27220</name>
</gene>
<feature type="chain" id="PRO_1000091199" description="D-alanine--D-alanine ligase">
    <location>
        <begin position="1"/>
        <end position="308"/>
    </location>
</feature>
<feature type="domain" description="ATP-grasp" evidence="2">
    <location>
        <begin position="103"/>
        <end position="302"/>
    </location>
</feature>
<feature type="binding site" evidence="2">
    <location>
        <begin position="130"/>
        <end position="184"/>
    </location>
    <ligand>
        <name>ATP</name>
        <dbReference type="ChEBI" id="CHEBI:30616"/>
    </ligand>
</feature>
<feature type="binding site" evidence="2">
    <location>
        <position position="252"/>
    </location>
    <ligand>
        <name>Mg(2+)</name>
        <dbReference type="ChEBI" id="CHEBI:18420"/>
        <label>1</label>
    </ligand>
</feature>
<feature type="binding site" evidence="2">
    <location>
        <position position="269"/>
    </location>
    <ligand>
        <name>Mg(2+)</name>
        <dbReference type="ChEBI" id="CHEBI:18420"/>
        <label>1</label>
    </ligand>
</feature>
<feature type="binding site" evidence="2">
    <location>
        <position position="269"/>
    </location>
    <ligand>
        <name>Mg(2+)</name>
        <dbReference type="ChEBI" id="CHEBI:18420"/>
        <label>2</label>
    </ligand>
</feature>
<feature type="binding site" evidence="2">
    <location>
        <position position="271"/>
    </location>
    <ligand>
        <name>Mg(2+)</name>
        <dbReference type="ChEBI" id="CHEBI:18420"/>
        <label>2</label>
    </ligand>
</feature>
<protein>
    <recommendedName>
        <fullName evidence="2">D-alanine--D-alanine ligase</fullName>
        <ecNumber evidence="2">6.3.2.4</ecNumber>
    </recommendedName>
    <alternativeName>
        <fullName evidence="2">D-Ala-D-Ala ligase</fullName>
    </alternativeName>
    <alternativeName>
        <fullName evidence="2">D-alanylalanine synthetase</fullName>
    </alternativeName>
</protein>
<evidence type="ECO:0000250" key="1"/>
<evidence type="ECO:0000255" key="2">
    <source>
        <dbReference type="HAMAP-Rule" id="MF_00047"/>
    </source>
</evidence>
<proteinExistence type="inferred from homology"/>
<sequence length="308" mass="33238">MTALQHVAVLMGGWSSEREVSLRSGAACAAALERKGYRVTRIDVQRDIATVLQNLKPDVALVMLHGKPGEDGTIQGVLETLGIPYSHSGVLSSSLAMRKDLAKTVMATAGVPVAEGLTLTRAEIAKAHVMAPPYVIKPVADGSSVGVFIVTEDQAHPPQELFRDDWPHGEELLVEKYIAGRELTCAVIKGEASDVIEIVPLLKFYDYEAKYSKGASKHVLPAPVLPFVYQEVRRLTLAAHGALGCRGVSRADFRYDDRIEGTGGLVCLEVNTQPGMTETSLVPELAGYAGVAFDELVQWMVEDASLDR</sequence>
<accession>B6JB38</accession>
<accession>F8BV61</accession>
<comment type="function">
    <text evidence="2">Cell wall formation.</text>
</comment>
<comment type="catalytic activity">
    <reaction evidence="2">
        <text>2 D-alanine + ATP = D-alanyl-D-alanine + ADP + phosphate + H(+)</text>
        <dbReference type="Rhea" id="RHEA:11224"/>
        <dbReference type="ChEBI" id="CHEBI:15378"/>
        <dbReference type="ChEBI" id="CHEBI:30616"/>
        <dbReference type="ChEBI" id="CHEBI:43474"/>
        <dbReference type="ChEBI" id="CHEBI:57416"/>
        <dbReference type="ChEBI" id="CHEBI:57822"/>
        <dbReference type="ChEBI" id="CHEBI:456216"/>
        <dbReference type="EC" id="6.3.2.4"/>
    </reaction>
</comment>
<comment type="cofactor">
    <cofactor evidence="1">
        <name>Mg(2+)</name>
        <dbReference type="ChEBI" id="CHEBI:18420"/>
    </cofactor>
    <cofactor evidence="1">
        <name>Mn(2+)</name>
        <dbReference type="ChEBI" id="CHEBI:29035"/>
    </cofactor>
    <text evidence="1">Binds 2 magnesium or manganese ions per subunit.</text>
</comment>
<comment type="pathway">
    <text evidence="2">Cell wall biogenesis; peptidoglycan biosynthesis.</text>
</comment>
<comment type="subcellular location">
    <subcellularLocation>
        <location evidence="2">Cytoplasm</location>
    </subcellularLocation>
</comment>
<comment type="similarity">
    <text evidence="2">Belongs to the D-alanine--D-alanine ligase family.</text>
</comment>
<name>DDL_AFIC5</name>